<dbReference type="EMBL" id="AK007043">
    <property type="status" value="NOT_ANNOTATED_CDS"/>
    <property type="molecule type" value="mRNA"/>
</dbReference>
<dbReference type="EMBL" id="AC025794">
    <property type="status" value="NOT_ANNOTATED_CDS"/>
    <property type="molecule type" value="Genomic_DNA"/>
</dbReference>
<dbReference type="EMBL" id="CH466612">
    <property type="protein sequence ID" value="EDL33359.1"/>
    <property type="molecule type" value="Genomic_DNA"/>
</dbReference>
<dbReference type="CCDS" id="CCDS50382.1"/>
<dbReference type="RefSeq" id="NP_001170818.1">
    <property type="nucleotide sequence ID" value="NM_001177347.1"/>
</dbReference>
<dbReference type="STRING" id="10090.ENSMUSP00000130094"/>
<dbReference type="SwissPalm" id="G3UW99"/>
<dbReference type="PaxDb" id="10090-ENSMUSP00000130094"/>
<dbReference type="ProteomicsDB" id="263111"/>
<dbReference type="Ensembl" id="ENSMUST00000163172.2">
    <property type="protein sequence ID" value="ENSMUSP00000130094.2"/>
    <property type="gene ID" value="ENSMUSG00000090840.3"/>
</dbReference>
<dbReference type="GeneID" id="74307"/>
<dbReference type="KEGG" id="mmu:74307"/>
<dbReference type="UCSC" id="uc008gmn.2">
    <property type="organism name" value="mouse"/>
</dbReference>
<dbReference type="AGR" id="MGI:1921557"/>
<dbReference type="CTD" id="111216277"/>
<dbReference type="MGI" id="MGI:1921557">
    <property type="gene designation" value="Tex54"/>
</dbReference>
<dbReference type="VEuPathDB" id="HostDB:ENSMUSG00000090840"/>
<dbReference type="eggNOG" id="ENOG502RK5X">
    <property type="taxonomic scope" value="Eukaryota"/>
</dbReference>
<dbReference type="GeneTree" id="ENSGT00700000106100"/>
<dbReference type="HOGENOM" id="CLU_2526909_0_0_1"/>
<dbReference type="InParanoid" id="G3UW99"/>
<dbReference type="OMA" id="PRECERG"/>
<dbReference type="OrthoDB" id="9630289at2759"/>
<dbReference type="BioGRID-ORCS" id="74307">
    <property type="hits" value="2 hits in 77 CRISPR screens"/>
</dbReference>
<dbReference type="PRO" id="PR:G3UW99"/>
<dbReference type="Proteomes" id="UP000000589">
    <property type="component" value="Chromosome 19"/>
</dbReference>
<dbReference type="RNAct" id="G3UW99">
    <property type="molecule type" value="protein"/>
</dbReference>
<dbReference type="Bgee" id="ENSMUSG00000090840">
    <property type="expression patterns" value="Expressed in testis and 63 other cell types or tissues"/>
</dbReference>
<name>TEX54_MOUSE</name>
<evidence type="ECO:0000250" key="1">
    <source>
        <dbReference type="UniProtKB" id="A0A1B0GVG6"/>
    </source>
</evidence>
<evidence type="ECO:0000256" key="2">
    <source>
        <dbReference type="SAM" id="MobiDB-lite"/>
    </source>
</evidence>
<evidence type="ECO:0000305" key="3"/>
<sequence>MGCCQDKNRWASDEQARDEVTEDGREGNEVDNSGRRKQRSNESLLITVLWRRLSMFSRRESSRSGKQDNQMQERKHEGSHKEPEKG</sequence>
<accession>G3UW99</accession>
<keyword id="KW-1185">Reference proteome</keyword>
<reference key="1">
    <citation type="journal article" date="2005" name="Science">
        <title>The transcriptional landscape of the mammalian genome.</title>
        <authorList>
            <person name="Carninci P."/>
            <person name="Kasukawa T."/>
            <person name="Katayama S."/>
            <person name="Gough J."/>
            <person name="Frith M.C."/>
            <person name="Maeda N."/>
            <person name="Oyama R."/>
            <person name="Ravasi T."/>
            <person name="Lenhard B."/>
            <person name="Wells C."/>
            <person name="Kodzius R."/>
            <person name="Shimokawa K."/>
            <person name="Bajic V.B."/>
            <person name="Brenner S.E."/>
            <person name="Batalov S."/>
            <person name="Forrest A.R."/>
            <person name="Zavolan M."/>
            <person name="Davis M.J."/>
            <person name="Wilming L.G."/>
            <person name="Aidinis V."/>
            <person name="Allen J.E."/>
            <person name="Ambesi-Impiombato A."/>
            <person name="Apweiler R."/>
            <person name="Aturaliya R.N."/>
            <person name="Bailey T.L."/>
            <person name="Bansal M."/>
            <person name="Baxter L."/>
            <person name="Beisel K.W."/>
            <person name="Bersano T."/>
            <person name="Bono H."/>
            <person name="Chalk A.M."/>
            <person name="Chiu K.P."/>
            <person name="Choudhary V."/>
            <person name="Christoffels A."/>
            <person name="Clutterbuck D.R."/>
            <person name="Crowe M.L."/>
            <person name="Dalla E."/>
            <person name="Dalrymple B.P."/>
            <person name="de Bono B."/>
            <person name="Della Gatta G."/>
            <person name="di Bernardo D."/>
            <person name="Down T."/>
            <person name="Engstrom P."/>
            <person name="Fagiolini M."/>
            <person name="Faulkner G."/>
            <person name="Fletcher C.F."/>
            <person name="Fukushima T."/>
            <person name="Furuno M."/>
            <person name="Futaki S."/>
            <person name="Gariboldi M."/>
            <person name="Georgii-Hemming P."/>
            <person name="Gingeras T.R."/>
            <person name="Gojobori T."/>
            <person name="Green R.E."/>
            <person name="Gustincich S."/>
            <person name="Harbers M."/>
            <person name="Hayashi Y."/>
            <person name="Hensch T.K."/>
            <person name="Hirokawa N."/>
            <person name="Hill D."/>
            <person name="Huminiecki L."/>
            <person name="Iacono M."/>
            <person name="Ikeo K."/>
            <person name="Iwama A."/>
            <person name="Ishikawa T."/>
            <person name="Jakt M."/>
            <person name="Kanapin A."/>
            <person name="Katoh M."/>
            <person name="Kawasawa Y."/>
            <person name="Kelso J."/>
            <person name="Kitamura H."/>
            <person name="Kitano H."/>
            <person name="Kollias G."/>
            <person name="Krishnan S.P."/>
            <person name="Kruger A."/>
            <person name="Kummerfeld S.K."/>
            <person name="Kurochkin I.V."/>
            <person name="Lareau L.F."/>
            <person name="Lazarevic D."/>
            <person name="Lipovich L."/>
            <person name="Liu J."/>
            <person name="Liuni S."/>
            <person name="McWilliam S."/>
            <person name="Madan Babu M."/>
            <person name="Madera M."/>
            <person name="Marchionni L."/>
            <person name="Matsuda H."/>
            <person name="Matsuzawa S."/>
            <person name="Miki H."/>
            <person name="Mignone F."/>
            <person name="Miyake S."/>
            <person name="Morris K."/>
            <person name="Mottagui-Tabar S."/>
            <person name="Mulder N."/>
            <person name="Nakano N."/>
            <person name="Nakauchi H."/>
            <person name="Ng P."/>
            <person name="Nilsson R."/>
            <person name="Nishiguchi S."/>
            <person name="Nishikawa S."/>
            <person name="Nori F."/>
            <person name="Ohara O."/>
            <person name="Okazaki Y."/>
            <person name="Orlando V."/>
            <person name="Pang K.C."/>
            <person name="Pavan W.J."/>
            <person name="Pavesi G."/>
            <person name="Pesole G."/>
            <person name="Petrovsky N."/>
            <person name="Piazza S."/>
            <person name="Reed J."/>
            <person name="Reid J.F."/>
            <person name="Ring B.Z."/>
            <person name="Ringwald M."/>
            <person name="Rost B."/>
            <person name="Ruan Y."/>
            <person name="Salzberg S.L."/>
            <person name="Sandelin A."/>
            <person name="Schneider C."/>
            <person name="Schoenbach C."/>
            <person name="Sekiguchi K."/>
            <person name="Semple C.A."/>
            <person name="Seno S."/>
            <person name="Sessa L."/>
            <person name="Sheng Y."/>
            <person name="Shibata Y."/>
            <person name="Shimada H."/>
            <person name="Shimada K."/>
            <person name="Silva D."/>
            <person name="Sinclair B."/>
            <person name="Sperling S."/>
            <person name="Stupka E."/>
            <person name="Sugiura K."/>
            <person name="Sultana R."/>
            <person name="Takenaka Y."/>
            <person name="Taki K."/>
            <person name="Tammoja K."/>
            <person name="Tan S.L."/>
            <person name="Tang S."/>
            <person name="Taylor M.S."/>
            <person name="Tegner J."/>
            <person name="Teichmann S.A."/>
            <person name="Ueda H.R."/>
            <person name="van Nimwegen E."/>
            <person name="Verardo R."/>
            <person name="Wei C.L."/>
            <person name="Yagi K."/>
            <person name="Yamanishi H."/>
            <person name="Zabarovsky E."/>
            <person name="Zhu S."/>
            <person name="Zimmer A."/>
            <person name="Hide W."/>
            <person name="Bult C."/>
            <person name="Grimmond S.M."/>
            <person name="Teasdale R.D."/>
            <person name="Liu E.T."/>
            <person name="Brusic V."/>
            <person name="Quackenbush J."/>
            <person name="Wahlestedt C."/>
            <person name="Mattick J.S."/>
            <person name="Hume D.A."/>
            <person name="Kai C."/>
            <person name="Sasaki D."/>
            <person name="Tomaru Y."/>
            <person name="Fukuda S."/>
            <person name="Kanamori-Katayama M."/>
            <person name="Suzuki M."/>
            <person name="Aoki J."/>
            <person name="Arakawa T."/>
            <person name="Iida J."/>
            <person name="Imamura K."/>
            <person name="Itoh M."/>
            <person name="Kato T."/>
            <person name="Kawaji H."/>
            <person name="Kawagashira N."/>
            <person name="Kawashima T."/>
            <person name="Kojima M."/>
            <person name="Kondo S."/>
            <person name="Konno H."/>
            <person name="Nakano K."/>
            <person name="Ninomiya N."/>
            <person name="Nishio T."/>
            <person name="Okada M."/>
            <person name="Plessy C."/>
            <person name="Shibata K."/>
            <person name="Shiraki T."/>
            <person name="Suzuki S."/>
            <person name="Tagami M."/>
            <person name="Waki K."/>
            <person name="Watahiki A."/>
            <person name="Okamura-Oho Y."/>
            <person name="Suzuki H."/>
            <person name="Kawai J."/>
            <person name="Hayashizaki Y."/>
        </authorList>
    </citation>
    <scope>NUCLEOTIDE SEQUENCE [LARGE SCALE MRNA]</scope>
</reference>
<reference key="2">
    <citation type="journal article" date="2009" name="PLoS Biol.">
        <title>Lineage-specific biology revealed by a finished genome assembly of the mouse.</title>
        <authorList>
            <person name="Church D.M."/>
            <person name="Goodstadt L."/>
            <person name="Hillier L.W."/>
            <person name="Zody M.C."/>
            <person name="Goldstein S."/>
            <person name="She X."/>
            <person name="Bult C.J."/>
            <person name="Agarwala R."/>
            <person name="Cherry J.L."/>
            <person name="DiCuccio M."/>
            <person name="Hlavina W."/>
            <person name="Kapustin Y."/>
            <person name="Meric P."/>
            <person name="Maglott D."/>
            <person name="Birtle Z."/>
            <person name="Marques A.C."/>
            <person name="Graves T."/>
            <person name="Zhou S."/>
            <person name="Teague B."/>
            <person name="Potamousis K."/>
            <person name="Churas C."/>
            <person name="Place M."/>
            <person name="Herschleb J."/>
            <person name="Runnheim R."/>
            <person name="Forrest D."/>
            <person name="Amos-Landgraf J."/>
            <person name="Schwartz D.C."/>
            <person name="Cheng Z."/>
            <person name="Lindblad-Toh K."/>
            <person name="Eichler E.E."/>
            <person name="Ponting C.P."/>
        </authorList>
    </citation>
    <scope>NUCLEOTIDE SEQUENCE [LARGE SCALE GENOMIC DNA]</scope>
    <source>
        <strain>C57BL/6J</strain>
    </source>
</reference>
<reference key="3">
    <citation type="submission" date="2005-07" db="EMBL/GenBank/DDBJ databases">
        <authorList>
            <person name="Mural R.J."/>
            <person name="Adams M.D."/>
            <person name="Myers E.W."/>
            <person name="Smith H.O."/>
            <person name="Venter J.C."/>
        </authorList>
    </citation>
    <scope>NUCLEOTIDE SEQUENCE</scope>
</reference>
<feature type="chain" id="PRO_0000443094" description="Testis-expressed protein 54">
    <location>
        <begin position="1"/>
        <end position="86"/>
    </location>
</feature>
<feature type="region of interest" description="Disordered" evidence="2">
    <location>
        <begin position="1"/>
        <end position="43"/>
    </location>
</feature>
<feature type="region of interest" description="Disordered" evidence="2">
    <location>
        <begin position="57"/>
        <end position="86"/>
    </location>
</feature>
<feature type="compositionally biased region" description="Basic and acidic residues" evidence="2">
    <location>
        <begin position="1"/>
        <end position="34"/>
    </location>
</feature>
<gene>
    <name evidence="1" type="primary">Tex54</name>
</gene>
<organism>
    <name type="scientific">Mus musculus</name>
    <name type="common">Mouse</name>
    <dbReference type="NCBI Taxonomy" id="10090"/>
    <lineage>
        <taxon>Eukaryota</taxon>
        <taxon>Metazoa</taxon>
        <taxon>Chordata</taxon>
        <taxon>Craniata</taxon>
        <taxon>Vertebrata</taxon>
        <taxon>Euteleostomi</taxon>
        <taxon>Mammalia</taxon>
        <taxon>Eutheria</taxon>
        <taxon>Euarchontoglires</taxon>
        <taxon>Glires</taxon>
        <taxon>Rodentia</taxon>
        <taxon>Myomorpha</taxon>
        <taxon>Muroidea</taxon>
        <taxon>Muridae</taxon>
        <taxon>Murinae</taxon>
        <taxon>Mus</taxon>
        <taxon>Mus</taxon>
    </lineage>
</organism>
<comment type="tissue specificity">
    <text evidence="3">Expressed in Testis.</text>
</comment>
<proteinExistence type="predicted"/>
<protein>
    <recommendedName>
        <fullName evidence="1">Testis-expressed protein 54</fullName>
    </recommendedName>
</protein>